<name>BETA_YERPE</name>
<evidence type="ECO:0000255" key="1">
    <source>
        <dbReference type="HAMAP-Rule" id="MF_00750"/>
    </source>
</evidence>
<reference key="1">
    <citation type="journal article" date="2001" name="Nature">
        <title>Genome sequence of Yersinia pestis, the causative agent of plague.</title>
        <authorList>
            <person name="Parkhill J."/>
            <person name="Wren B.W."/>
            <person name="Thomson N.R."/>
            <person name="Titball R.W."/>
            <person name="Holden M.T.G."/>
            <person name="Prentice M.B."/>
            <person name="Sebaihia M."/>
            <person name="James K.D."/>
            <person name="Churcher C.M."/>
            <person name="Mungall K.L."/>
            <person name="Baker S."/>
            <person name="Basham D."/>
            <person name="Bentley S.D."/>
            <person name="Brooks K."/>
            <person name="Cerdeno-Tarraga A.-M."/>
            <person name="Chillingworth T."/>
            <person name="Cronin A."/>
            <person name="Davies R.M."/>
            <person name="Davis P."/>
            <person name="Dougan G."/>
            <person name="Feltwell T."/>
            <person name="Hamlin N."/>
            <person name="Holroyd S."/>
            <person name="Jagels K."/>
            <person name="Karlyshev A.V."/>
            <person name="Leather S."/>
            <person name="Moule S."/>
            <person name="Oyston P.C.F."/>
            <person name="Quail M.A."/>
            <person name="Rutherford K.M."/>
            <person name="Simmonds M."/>
            <person name="Skelton J."/>
            <person name="Stevens K."/>
            <person name="Whitehead S."/>
            <person name="Barrell B.G."/>
        </authorList>
    </citation>
    <scope>NUCLEOTIDE SEQUENCE [LARGE SCALE GENOMIC DNA]</scope>
    <source>
        <strain>CO-92 / Biovar Orientalis</strain>
    </source>
</reference>
<reference key="2">
    <citation type="journal article" date="2004" name="DNA Res.">
        <title>Complete genome sequence of Yersinia pestis strain 91001, an isolate avirulent to humans.</title>
        <authorList>
            <person name="Song Y."/>
            <person name="Tong Z."/>
            <person name="Wang J."/>
            <person name="Wang L."/>
            <person name="Guo Z."/>
            <person name="Han Y."/>
            <person name="Zhang J."/>
            <person name="Pei D."/>
            <person name="Zhou D."/>
            <person name="Qin H."/>
            <person name="Pang X."/>
            <person name="Han Y."/>
            <person name="Zhai J."/>
            <person name="Li M."/>
            <person name="Cui B."/>
            <person name="Qi Z."/>
            <person name="Jin L."/>
            <person name="Dai R."/>
            <person name="Chen F."/>
            <person name="Li S."/>
            <person name="Ye C."/>
            <person name="Du Z."/>
            <person name="Lin W."/>
            <person name="Wang J."/>
            <person name="Yu J."/>
            <person name="Yang H."/>
            <person name="Wang J."/>
            <person name="Huang P."/>
            <person name="Yang R."/>
        </authorList>
    </citation>
    <scope>NUCLEOTIDE SEQUENCE [LARGE SCALE GENOMIC DNA]</scope>
    <source>
        <strain>91001 / Biovar Mediaevalis</strain>
    </source>
</reference>
<proteinExistence type="inferred from homology"/>
<dbReference type="EC" id="1.1.99.1" evidence="1"/>
<dbReference type="EC" id="1.2.1.8" evidence="1"/>
<dbReference type="EMBL" id="AL590842">
    <property type="protein sequence ID" value="CAL19829.1"/>
    <property type="molecule type" value="Genomic_DNA"/>
</dbReference>
<dbReference type="EMBL" id="AE017042">
    <property type="protein sequence ID" value="AAS61245.1"/>
    <property type="molecule type" value="Genomic_DNA"/>
</dbReference>
<dbReference type="PIR" id="AC0143">
    <property type="entry name" value="AC0143"/>
</dbReference>
<dbReference type="RefSeq" id="WP_002220180.1">
    <property type="nucleotide sequence ID" value="NZ_WHLN01000108.1"/>
</dbReference>
<dbReference type="RefSeq" id="YP_002346204.1">
    <property type="nucleotide sequence ID" value="NC_003143.1"/>
</dbReference>
<dbReference type="SMR" id="Q8ZGW0"/>
<dbReference type="STRING" id="214092.YPO1165"/>
<dbReference type="PaxDb" id="214092-YPO1165"/>
<dbReference type="EnsemblBacteria" id="AAS61245">
    <property type="protein sequence ID" value="AAS61245"/>
    <property type="gene ID" value="YP_0994"/>
</dbReference>
<dbReference type="GeneID" id="57977304"/>
<dbReference type="KEGG" id="ype:YPO1165"/>
<dbReference type="KEGG" id="ypm:YP_0994"/>
<dbReference type="PATRIC" id="fig|214092.21.peg.1462"/>
<dbReference type="eggNOG" id="COG2303">
    <property type="taxonomic scope" value="Bacteria"/>
</dbReference>
<dbReference type="HOGENOM" id="CLU_002865_7_1_6"/>
<dbReference type="OMA" id="NHFESCA"/>
<dbReference type="OrthoDB" id="9785276at2"/>
<dbReference type="UniPathway" id="UPA00529">
    <property type="reaction ID" value="UER00385"/>
</dbReference>
<dbReference type="Proteomes" id="UP000000815">
    <property type="component" value="Chromosome"/>
</dbReference>
<dbReference type="Proteomes" id="UP000001019">
    <property type="component" value="Chromosome"/>
</dbReference>
<dbReference type="GO" id="GO:0016020">
    <property type="term" value="C:membrane"/>
    <property type="evidence" value="ECO:0000318"/>
    <property type="project" value="GO_Central"/>
</dbReference>
<dbReference type="GO" id="GO:0008802">
    <property type="term" value="F:betaine-aldehyde dehydrogenase (NAD+) activity"/>
    <property type="evidence" value="ECO:0007669"/>
    <property type="project" value="UniProtKB-EC"/>
</dbReference>
<dbReference type="GO" id="GO:0008812">
    <property type="term" value="F:choline dehydrogenase activity"/>
    <property type="evidence" value="ECO:0000318"/>
    <property type="project" value="GO_Central"/>
</dbReference>
<dbReference type="GO" id="GO:0050660">
    <property type="term" value="F:flavin adenine dinucleotide binding"/>
    <property type="evidence" value="ECO:0007669"/>
    <property type="project" value="InterPro"/>
</dbReference>
<dbReference type="GO" id="GO:0019285">
    <property type="term" value="P:glycine betaine biosynthetic process from choline"/>
    <property type="evidence" value="ECO:0000318"/>
    <property type="project" value="GO_Central"/>
</dbReference>
<dbReference type="Gene3D" id="3.50.50.60">
    <property type="entry name" value="FAD/NAD(P)-binding domain"/>
    <property type="match status" value="1"/>
</dbReference>
<dbReference type="Gene3D" id="3.30.560.10">
    <property type="entry name" value="Glucose Oxidase, domain 3"/>
    <property type="match status" value="1"/>
</dbReference>
<dbReference type="HAMAP" id="MF_00750">
    <property type="entry name" value="Choline_dehydrogen"/>
    <property type="match status" value="1"/>
</dbReference>
<dbReference type="InterPro" id="IPR011533">
    <property type="entry name" value="BetA"/>
</dbReference>
<dbReference type="InterPro" id="IPR036188">
    <property type="entry name" value="FAD/NAD-bd_sf"/>
</dbReference>
<dbReference type="InterPro" id="IPR012132">
    <property type="entry name" value="GMC_OxRdtase"/>
</dbReference>
<dbReference type="InterPro" id="IPR000172">
    <property type="entry name" value="GMC_OxRdtase_N"/>
</dbReference>
<dbReference type="InterPro" id="IPR007867">
    <property type="entry name" value="GMC_OxRtase_C"/>
</dbReference>
<dbReference type="NCBIfam" id="TIGR01810">
    <property type="entry name" value="betA"/>
    <property type="match status" value="1"/>
</dbReference>
<dbReference type="NCBIfam" id="NF002550">
    <property type="entry name" value="PRK02106.1"/>
    <property type="match status" value="1"/>
</dbReference>
<dbReference type="PANTHER" id="PTHR11552:SF147">
    <property type="entry name" value="CHOLINE DEHYDROGENASE, MITOCHONDRIAL"/>
    <property type="match status" value="1"/>
</dbReference>
<dbReference type="PANTHER" id="PTHR11552">
    <property type="entry name" value="GLUCOSE-METHANOL-CHOLINE GMC OXIDOREDUCTASE"/>
    <property type="match status" value="1"/>
</dbReference>
<dbReference type="Pfam" id="PF05199">
    <property type="entry name" value="GMC_oxred_C"/>
    <property type="match status" value="1"/>
</dbReference>
<dbReference type="Pfam" id="PF00732">
    <property type="entry name" value="GMC_oxred_N"/>
    <property type="match status" value="1"/>
</dbReference>
<dbReference type="PIRSF" id="PIRSF000137">
    <property type="entry name" value="Alcohol_oxidase"/>
    <property type="match status" value="1"/>
</dbReference>
<dbReference type="SUPFAM" id="SSF54373">
    <property type="entry name" value="FAD-linked reductases, C-terminal domain"/>
    <property type="match status" value="1"/>
</dbReference>
<dbReference type="SUPFAM" id="SSF51905">
    <property type="entry name" value="FAD/NAD(P)-binding domain"/>
    <property type="match status" value="1"/>
</dbReference>
<dbReference type="PROSITE" id="PS00623">
    <property type="entry name" value="GMC_OXRED_1"/>
    <property type="match status" value="1"/>
</dbReference>
<dbReference type="PROSITE" id="PS00624">
    <property type="entry name" value="GMC_OXRED_2"/>
    <property type="match status" value="1"/>
</dbReference>
<accession>Q8ZGW0</accession>
<accession>Q0WHN4</accession>
<organism>
    <name type="scientific">Yersinia pestis</name>
    <dbReference type="NCBI Taxonomy" id="632"/>
    <lineage>
        <taxon>Bacteria</taxon>
        <taxon>Pseudomonadati</taxon>
        <taxon>Pseudomonadota</taxon>
        <taxon>Gammaproteobacteria</taxon>
        <taxon>Enterobacterales</taxon>
        <taxon>Yersiniaceae</taxon>
        <taxon>Yersinia</taxon>
    </lineage>
</organism>
<feature type="chain" id="PRO_0000205610" description="Oxygen-dependent choline dehydrogenase">
    <location>
        <begin position="1"/>
        <end position="567"/>
    </location>
</feature>
<feature type="active site" description="Proton acceptor" evidence="1">
    <location>
        <position position="473"/>
    </location>
</feature>
<feature type="binding site" evidence="1">
    <location>
        <begin position="4"/>
        <end position="33"/>
    </location>
    <ligand>
        <name>FAD</name>
        <dbReference type="ChEBI" id="CHEBI:57692"/>
    </ligand>
</feature>
<comment type="function">
    <text evidence="1">Involved in the biosynthesis of the osmoprotectant glycine betaine. Catalyzes the oxidation of choline to betaine aldehyde and betaine aldehyde to glycine betaine at the same rate.</text>
</comment>
<comment type="catalytic activity">
    <reaction evidence="1">
        <text>choline + A = betaine aldehyde + AH2</text>
        <dbReference type="Rhea" id="RHEA:17433"/>
        <dbReference type="ChEBI" id="CHEBI:13193"/>
        <dbReference type="ChEBI" id="CHEBI:15354"/>
        <dbReference type="ChEBI" id="CHEBI:15710"/>
        <dbReference type="ChEBI" id="CHEBI:17499"/>
        <dbReference type="EC" id="1.1.99.1"/>
    </reaction>
</comment>
<comment type="catalytic activity">
    <reaction evidence="1">
        <text>betaine aldehyde + NAD(+) + H2O = glycine betaine + NADH + 2 H(+)</text>
        <dbReference type="Rhea" id="RHEA:15305"/>
        <dbReference type="ChEBI" id="CHEBI:15377"/>
        <dbReference type="ChEBI" id="CHEBI:15378"/>
        <dbReference type="ChEBI" id="CHEBI:15710"/>
        <dbReference type="ChEBI" id="CHEBI:17750"/>
        <dbReference type="ChEBI" id="CHEBI:57540"/>
        <dbReference type="ChEBI" id="CHEBI:57945"/>
        <dbReference type="EC" id="1.2.1.8"/>
    </reaction>
</comment>
<comment type="cofactor">
    <cofactor evidence="1">
        <name>FAD</name>
        <dbReference type="ChEBI" id="CHEBI:57692"/>
    </cofactor>
</comment>
<comment type="pathway">
    <text evidence="1">Amine and polyamine biosynthesis; betaine biosynthesis via choline pathway; betaine aldehyde from choline (cytochrome c reductase route): step 1/1.</text>
</comment>
<comment type="similarity">
    <text evidence="1">Belongs to the GMC oxidoreductase family.</text>
</comment>
<sequence>MEYDYIIIGAGSAGNVLAARLTEDADVTVLLLEAGGPDYRLDFRTQMPAALAFPLQGKRYNWAYETDPEPHMNNRRMECGRGKGLGGSSLINGMCYIRGNAMDFDHWASLSGLEDWSYLDCLPYFRKAETRDIGPNDFHGGEGPVSVTTPKIGNNPLFHAMVAAGVQAGYPRTDDLNGYQQEGFGPMDRTVTPKGRRASTARGYLDQARPRNNLTIITHALTDRILFEGKRATGVRYLKGDAGTGQTAYARREVLLCGGAIASPQILQRSGIGPAELLQRLDIPLVQALPGVGENLQDHLEMYLQYSCKQPVSLYPALLWFNQPKIGIEWLFNGTGVGASNQFEAGGFIRSRDAFTWPNIQYHFLPVAINYNGSNAVKEHGFQAHVGSMRSPSRGRIQVKSKDPRQHPSILFNYMSSEQDWHEFRDAIRITREIIAQPALDPYRGREISPGANVQNDDELDAFIREHAETAYHPSCSCKMGDDKMAVVDGQGRVHGVQGLRVVDASIMPQIITGNLNATTIMIAEKIADRIRGCQPLAKSNAAYFIAGDTPARTSPVRHSLPVTSYP</sequence>
<protein>
    <recommendedName>
        <fullName evidence="1">Oxygen-dependent choline dehydrogenase</fullName>
        <shortName evidence="1">CDH</shortName>
        <shortName evidence="1">CHD</shortName>
        <ecNumber evidence="1">1.1.99.1</ecNumber>
    </recommendedName>
    <alternativeName>
        <fullName evidence="1">Betaine aldehyde dehydrogenase</fullName>
        <shortName evidence="1">BADH</shortName>
        <ecNumber evidence="1">1.2.1.8</ecNumber>
    </alternativeName>
</protein>
<gene>
    <name evidence="1" type="primary">betA</name>
    <name type="ordered locus">YPO1165</name>
    <name type="ordered locus">YP_0994</name>
</gene>
<keyword id="KW-0274">FAD</keyword>
<keyword id="KW-0285">Flavoprotein</keyword>
<keyword id="KW-0520">NAD</keyword>
<keyword id="KW-0560">Oxidoreductase</keyword>
<keyword id="KW-1185">Reference proteome</keyword>